<proteinExistence type="inferred from homology"/>
<name>EFP_GLOVI</name>
<accession>Q7NL41</accession>
<feature type="chain" id="PRO_0000094255" description="Elongation factor P">
    <location>
        <begin position="1"/>
        <end position="187"/>
    </location>
</feature>
<evidence type="ECO:0000255" key="1">
    <source>
        <dbReference type="HAMAP-Rule" id="MF_00141"/>
    </source>
</evidence>
<reference key="1">
    <citation type="journal article" date="2003" name="DNA Res.">
        <title>Complete genome structure of Gloeobacter violaceus PCC 7421, a cyanobacterium that lacks thylakoids.</title>
        <authorList>
            <person name="Nakamura Y."/>
            <person name="Kaneko T."/>
            <person name="Sato S."/>
            <person name="Mimuro M."/>
            <person name="Miyashita H."/>
            <person name="Tsuchiya T."/>
            <person name="Sasamoto S."/>
            <person name="Watanabe A."/>
            <person name="Kawashima K."/>
            <person name="Kishida Y."/>
            <person name="Kiyokawa C."/>
            <person name="Kohara M."/>
            <person name="Matsumoto M."/>
            <person name="Matsuno A."/>
            <person name="Nakazaki N."/>
            <person name="Shimpo S."/>
            <person name="Takeuchi C."/>
            <person name="Yamada M."/>
            <person name="Tabata S."/>
        </authorList>
    </citation>
    <scope>NUCLEOTIDE SEQUENCE [LARGE SCALE GENOMIC DNA]</scope>
    <source>
        <strain>ATCC 29082 / PCC 7421</strain>
    </source>
</reference>
<keyword id="KW-0963">Cytoplasm</keyword>
<keyword id="KW-0251">Elongation factor</keyword>
<keyword id="KW-0648">Protein biosynthesis</keyword>
<keyword id="KW-1185">Reference proteome</keyword>
<dbReference type="EMBL" id="BA000045">
    <property type="protein sequence ID" value="BAC89226.1"/>
    <property type="molecule type" value="Genomic_DNA"/>
</dbReference>
<dbReference type="RefSeq" id="NP_924231.1">
    <property type="nucleotide sequence ID" value="NC_005125.1"/>
</dbReference>
<dbReference type="RefSeq" id="WP_011141285.1">
    <property type="nucleotide sequence ID" value="NC_005125.1"/>
</dbReference>
<dbReference type="SMR" id="Q7NL41"/>
<dbReference type="FunCoup" id="Q7NL41">
    <property type="interactions" value="237"/>
</dbReference>
<dbReference type="STRING" id="251221.gene:10758766"/>
<dbReference type="EnsemblBacteria" id="BAC89226">
    <property type="protein sequence ID" value="BAC89226"/>
    <property type="gene ID" value="BAC89226"/>
</dbReference>
<dbReference type="KEGG" id="gvi:glr1285"/>
<dbReference type="PATRIC" id="fig|251221.4.peg.1307"/>
<dbReference type="eggNOG" id="COG0231">
    <property type="taxonomic scope" value="Bacteria"/>
</dbReference>
<dbReference type="HOGENOM" id="CLU_074944_0_1_3"/>
<dbReference type="InParanoid" id="Q7NL41"/>
<dbReference type="OrthoDB" id="9801844at2"/>
<dbReference type="PhylomeDB" id="Q7NL41"/>
<dbReference type="UniPathway" id="UPA00345"/>
<dbReference type="Proteomes" id="UP000000557">
    <property type="component" value="Chromosome"/>
</dbReference>
<dbReference type="GO" id="GO:0005737">
    <property type="term" value="C:cytoplasm"/>
    <property type="evidence" value="ECO:0000318"/>
    <property type="project" value="GO_Central"/>
</dbReference>
<dbReference type="GO" id="GO:0003746">
    <property type="term" value="F:translation elongation factor activity"/>
    <property type="evidence" value="ECO:0000318"/>
    <property type="project" value="GO_Central"/>
</dbReference>
<dbReference type="GO" id="GO:0043043">
    <property type="term" value="P:peptide biosynthetic process"/>
    <property type="evidence" value="ECO:0007669"/>
    <property type="project" value="InterPro"/>
</dbReference>
<dbReference type="CDD" id="cd04470">
    <property type="entry name" value="S1_EF-P_repeat_1"/>
    <property type="match status" value="1"/>
</dbReference>
<dbReference type="CDD" id="cd05794">
    <property type="entry name" value="S1_EF-P_repeat_2"/>
    <property type="match status" value="1"/>
</dbReference>
<dbReference type="FunFam" id="2.30.30.30:FF:000003">
    <property type="entry name" value="Elongation factor P"/>
    <property type="match status" value="1"/>
</dbReference>
<dbReference type="FunFam" id="2.40.50.140:FF:000004">
    <property type="entry name" value="Elongation factor P"/>
    <property type="match status" value="1"/>
</dbReference>
<dbReference type="FunFam" id="2.40.50.140:FF:000009">
    <property type="entry name" value="Elongation factor P"/>
    <property type="match status" value="1"/>
</dbReference>
<dbReference type="Gene3D" id="2.30.30.30">
    <property type="match status" value="1"/>
</dbReference>
<dbReference type="Gene3D" id="2.40.50.140">
    <property type="entry name" value="Nucleic acid-binding proteins"/>
    <property type="match status" value="2"/>
</dbReference>
<dbReference type="HAMAP" id="MF_00141">
    <property type="entry name" value="EF_P"/>
    <property type="match status" value="1"/>
</dbReference>
<dbReference type="InterPro" id="IPR015365">
    <property type="entry name" value="Elong-fact-P_C"/>
</dbReference>
<dbReference type="InterPro" id="IPR012340">
    <property type="entry name" value="NA-bd_OB-fold"/>
</dbReference>
<dbReference type="InterPro" id="IPR014722">
    <property type="entry name" value="Rib_uL2_dom2"/>
</dbReference>
<dbReference type="InterPro" id="IPR020599">
    <property type="entry name" value="Transl_elong_fac_P/YeiP"/>
</dbReference>
<dbReference type="InterPro" id="IPR013185">
    <property type="entry name" value="Transl_elong_KOW-like"/>
</dbReference>
<dbReference type="InterPro" id="IPR001059">
    <property type="entry name" value="Transl_elong_P/YeiP_cen"/>
</dbReference>
<dbReference type="InterPro" id="IPR013852">
    <property type="entry name" value="Transl_elong_P/YeiP_CS"/>
</dbReference>
<dbReference type="InterPro" id="IPR011768">
    <property type="entry name" value="Transl_elongation_fac_P"/>
</dbReference>
<dbReference type="InterPro" id="IPR008991">
    <property type="entry name" value="Translation_prot_SH3-like_sf"/>
</dbReference>
<dbReference type="NCBIfam" id="TIGR00038">
    <property type="entry name" value="efp"/>
    <property type="match status" value="1"/>
</dbReference>
<dbReference type="NCBIfam" id="NF001810">
    <property type="entry name" value="PRK00529.1"/>
    <property type="match status" value="1"/>
</dbReference>
<dbReference type="PANTHER" id="PTHR30053">
    <property type="entry name" value="ELONGATION FACTOR P"/>
    <property type="match status" value="1"/>
</dbReference>
<dbReference type="PANTHER" id="PTHR30053:SF12">
    <property type="entry name" value="ELONGATION FACTOR P (EF-P) FAMILY PROTEIN"/>
    <property type="match status" value="1"/>
</dbReference>
<dbReference type="Pfam" id="PF01132">
    <property type="entry name" value="EFP"/>
    <property type="match status" value="1"/>
</dbReference>
<dbReference type="Pfam" id="PF08207">
    <property type="entry name" value="EFP_N"/>
    <property type="match status" value="1"/>
</dbReference>
<dbReference type="Pfam" id="PF09285">
    <property type="entry name" value="Elong-fact-P_C"/>
    <property type="match status" value="1"/>
</dbReference>
<dbReference type="PIRSF" id="PIRSF005901">
    <property type="entry name" value="EF-P"/>
    <property type="match status" value="1"/>
</dbReference>
<dbReference type="SMART" id="SM01185">
    <property type="entry name" value="EFP"/>
    <property type="match status" value="1"/>
</dbReference>
<dbReference type="SMART" id="SM00841">
    <property type="entry name" value="Elong-fact-P_C"/>
    <property type="match status" value="1"/>
</dbReference>
<dbReference type="SUPFAM" id="SSF50249">
    <property type="entry name" value="Nucleic acid-binding proteins"/>
    <property type="match status" value="2"/>
</dbReference>
<dbReference type="SUPFAM" id="SSF50104">
    <property type="entry name" value="Translation proteins SH3-like domain"/>
    <property type="match status" value="1"/>
</dbReference>
<dbReference type="PROSITE" id="PS01275">
    <property type="entry name" value="EFP"/>
    <property type="match status" value="1"/>
</dbReference>
<organism>
    <name type="scientific">Gloeobacter violaceus (strain ATCC 29082 / PCC 7421)</name>
    <dbReference type="NCBI Taxonomy" id="251221"/>
    <lineage>
        <taxon>Bacteria</taxon>
        <taxon>Bacillati</taxon>
        <taxon>Cyanobacteriota</taxon>
        <taxon>Cyanophyceae</taxon>
        <taxon>Gloeobacterales</taxon>
        <taxon>Gloeobacteraceae</taxon>
        <taxon>Gloeobacter</taxon>
    </lineage>
</organism>
<protein>
    <recommendedName>
        <fullName evidence="1">Elongation factor P</fullName>
        <shortName evidence="1">EF-P</shortName>
    </recommendedName>
</protein>
<sequence>MISSNDFRTGTTIELDGQVWRVIEFLHVKPGKGSAFVRTKLKNVMTGNVNERTFRAGETLPQAVVEKRDMQFVYPQGDNEYVFMDMESYEQEALTRETLGDGAKYLKEGMSVSILKWQERVIGVDLPNTVVLQVVETDPGVKGDTAQGGTKPAKVETGAEVMVPLFITIGEKIKIDTRDNSYLGREN</sequence>
<gene>
    <name evidence="1" type="primary">efp</name>
    <name type="ordered locus">glr1285</name>
</gene>
<comment type="function">
    <text evidence="1">Involved in peptide bond synthesis. Stimulates efficient translation and peptide-bond synthesis on native or reconstituted 70S ribosomes in vitro. Probably functions indirectly by altering the affinity of the ribosome for aminoacyl-tRNA, thus increasing their reactivity as acceptors for peptidyl transferase.</text>
</comment>
<comment type="pathway">
    <text evidence="1">Protein biosynthesis; polypeptide chain elongation.</text>
</comment>
<comment type="subcellular location">
    <subcellularLocation>
        <location evidence="1">Cytoplasm</location>
    </subcellularLocation>
</comment>
<comment type="similarity">
    <text evidence="1">Belongs to the elongation factor P family.</text>
</comment>